<reference evidence="2" key="1">
    <citation type="journal article" date="2001" name="Rapid Commun. Mass Spectrom.">
        <title>Bioactive dahlein peptides from the skin secretions of the Australian aquatic frog Litoria dahlii: sequence determination by electrospray mass spectrometry.</title>
        <authorList>
            <person name="Wegener K.L."/>
            <person name="Brinkworth C.S."/>
            <person name="Bowie J.H."/>
            <person name="Wallace J.C."/>
            <person name="Tyler M.J."/>
        </authorList>
    </citation>
    <scope>PROTEIN SEQUENCE</scope>
    <scope>FUNCTION</scope>
    <scope>SUBCELLULAR LOCATION</scope>
    <scope>TISSUE SPECIFICITY</scope>
    <scope>MASS SPECTROMETRY</scope>
    <source>
        <tissue evidence="1">Skin secretion</tissue>
    </source>
</reference>
<accession>P84264</accession>
<protein>
    <recommendedName>
        <fullName>Dahlein-4.1</fullName>
    </recommendedName>
</protein>
<proteinExistence type="evidence at protein level"/>
<feature type="peptide" id="PRO_0000043774" description="Dahlein-4.1">
    <location>
        <begin position="1"/>
        <end position="23"/>
    </location>
</feature>
<comment type="function">
    <text evidence="1">Has no antimicrobial activity.</text>
</comment>
<comment type="subcellular location">
    <subcellularLocation>
        <location evidence="1">Secreted</location>
    </subcellularLocation>
</comment>
<comment type="tissue specificity">
    <text evidence="1">Expressed by the skin dorsal glands.</text>
</comment>
<comment type="mass spectrometry"/>
<sequence>GLWQLIKDKIKDAATGFVTGIQS</sequence>
<evidence type="ECO:0000269" key="1">
    <source>
    </source>
</evidence>
<evidence type="ECO:0000305" key="2"/>
<dbReference type="GO" id="GO:0005576">
    <property type="term" value="C:extracellular region"/>
    <property type="evidence" value="ECO:0000314"/>
    <property type="project" value="UniProtKB"/>
</dbReference>
<dbReference type="GO" id="GO:0006952">
    <property type="term" value="P:defense response"/>
    <property type="evidence" value="ECO:0007669"/>
    <property type="project" value="UniProtKB-KW"/>
</dbReference>
<organism>
    <name type="scientific">Ranoidea dahlii</name>
    <name type="common">Dahl's aquatic frog</name>
    <name type="synonym">Litoria dahlii</name>
    <dbReference type="NCBI Taxonomy" id="299727"/>
    <lineage>
        <taxon>Eukaryota</taxon>
        <taxon>Metazoa</taxon>
        <taxon>Chordata</taxon>
        <taxon>Craniata</taxon>
        <taxon>Vertebrata</taxon>
        <taxon>Euteleostomi</taxon>
        <taxon>Amphibia</taxon>
        <taxon>Batrachia</taxon>
        <taxon>Anura</taxon>
        <taxon>Neobatrachia</taxon>
        <taxon>Hyloidea</taxon>
        <taxon>Hylidae</taxon>
        <taxon>Pelodryadinae</taxon>
        <taxon>Ranoidea</taxon>
    </lineage>
</organism>
<name>DAH41_RANDH</name>
<keyword id="KW-0878">Amphibian defense peptide</keyword>
<keyword id="KW-0903">Direct protein sequencing</keyword>
<keyword id="KW-0964">Secreted</keyword>